<feature type="chain" id="PRO_0000380286" description="DNA ligase">
    <location>
        <begin position="1"/>
        <end position="669"/>
    </location>
</feature>
<feature type="domain" description="BRCT" evidence="1">
    <location>
        <begin position="591"/>
        <end position="669"/>
    </location>
</feature>
<feature type="active site" description="N6-AMP-lysine intermediate" evidence="1">
    <location>
        <position position="114"/>
    </location>
</feature>
<feature type="binding site" evidence="1">
    <location>
        <begin position="31"/>
        <end position="35"/>
    </location>
    <ligand>
        <name>NAD(+)</name>
        <dbReference type="ChEBI" id="CHEBI:57540"/>
    </ligand>
</feature>
<feature type="binding site" evidence="1">
    <location>
        <begin position="80"/>
        <end position="81"/>
    </location>
    <ligand>
        <name>NAD(+)</name>
        <dbReference type="ChEBI" id="CHEBI:57540"/>
    </ligand>
</feature>
<feature type="binding site" evidence="1">
    <location>
        <position position="112"/>
    </location>
    <ligand>
        <name>NAD(+)</name>
        <dbReference type="ChEBI" id="CHEBI:57540"/>
    </ligand>
</feature>
<feature type="binding site" evidence="1">
    <location>
        <position position="135"/>
    </location>
    <ligand>
        <name>NAD(+)</name>
        <dbReference type="ChEBI" id="CHEBI:57540"/>
    </ligand>
</feature>
<feature type="binding site" evidence="1">
    <location>
        <position position="172"/>
    </location>
    <ligand>
        <name>NAD(+)</name>
        <dbReference type="ChEBI" id="CHEBI:57540"/>
    </ligand>
</feature>
<feature type="binding site" evidence="1">
    <location>
        <position position="289"/>
    </location>
    <ligand>
        <name>NAD(+)</name>
        <dbReference type="ChEBI" id="CHEBI:57540"/>
    </ligand>
</feature>
<feature type="binding site" evidence="1">
    <location>
        <position position="313"/>
    </location>
    <ligand>
        <name>NAD(+)</name>
        <dbReference type="ChEBI" id="CHEBI:57540"/>
    </ligand>
</feature>
<feature type="binding site" evidence="1">
    <location>
        <position position="407"/>
    </location>
    <ligand>
        <name>Zn(2+)</name>
        <dbReference type="ChEBI" id="CHEBI:29105"/>
    </ligand>
</feature>
<feature type="binding site" evidence="1">
    <location>
        <position position="410"/>
    </location>
    <ligand>
        <name>Zn(2+)</name>
        <dbReference type="ChEBI" id="CHEBI:29105"/>
    </ligand>
</feature>
<feature type="binding site" evidence="1">
    <location>
        <position position="425"/>
    </location>
    <ligand>
        <name>Zn(2+)</name>
        <dbReference type="ChEBI" id="CHEBI:29105"/>
    </ligand>
</feature>
<feature type="binding site" evidence="1">
    <location>
        <position position="431"/>
    </location>
    <ligand>
        <name>Zn(2+)</name>
        <dbReference type="ChEBI" id="CHEBI:29105"/>
    </ligand>
</feature>
<evidence type="ECO:0000255" key="1">
    <source>
        <dbReference type="HAMAP-Rule" id="MF_01588"/>
    </source>
</evidence>
<protein>
    <recommendedName>
        <fullName evidence="1">DNA ligase</fullName>
        <ecNumber evidence="1">6.5.1.2</ecNumber>
    </recommendedName>
    <alternativeName>
        <fullName evidence="1">Polydeoxyribonucleotide synthase [NAD(+)]</fullName>
    </alternativeName>
</protein>
<gene>
    <name evidence="1" type="primary">ligA</name>
    <name type="ordered locus">VSAL_I2353</name>
</gene>
<reference key="1">
    <citation type="journal article" date="2008" name="BMC Genomics">
        <title>The genome sequence of the fish pathogen Aliivibrio salmonicida strain LFI1238 shows extensive evidence of gene decay.</title>
        <authorList>
            <person name="Hjerde E."/>
            <person name="Lorentzen M.S."/>
            <person name="Holden M.T."/>
            <person name="Seeger K."/>
            <person name="Paulsen S."/>
            <person name="Bason N."/>
            <person name="Churcher C."/>
            <person name="Harris D."/>
            <person name="Norbertczak H."/>
            <person name="Quail M.A."/>
            <person name="Sanders S."/>
            <person name="Thurston S."/>
            <person name="Parkhill J."/>
            <person name="Willassen N.P."/>
            <person name="Thomson N.R."/>
        </authorList>
    </citation>
    <scope>NUCLEOTIDE SEQUENCE [LARGE SCALE GENOMIC DNA]</scope>
    <source>
        <strain>LFI1238</strain>
    </source>
</reference>
<keyword id="KW-0227">DNA damage</keyword>
<keyword id="KW-0234">DNA repair</keyword>
<keyword id="KW-0235">DNA replication</keyword>
<keyword id="KW-0436">Ligase</keyword>
<keyword id="KW-0460">Magnesium</keyword>
<keyword id="KW-0464">Manganese</keyword>
<keyword id="KW-0479">Metal-binding</keyword>
<keyword id="KW-0520">NAD</keyword>
<keyword id="KW-0862">Zinc</keyword>
<sequence>MSIEKTLDELKKQLNYHAYRYYVEDSPELPDAEYDRMMQQLLLIEKEHPEFMTVDSPSQRVGGEALGGFTQVQHEIPMLSLDNAFNDNELDSFEKRINDRLISDSVSLFCCEPKLDGLAVSLLYVDGLLVQAGTRGDGATGENITENVRTIRCIPLTLQGEGWPTRLEVRGEVFMPKAGFDALNERALKRAEKPFANPRNAAAGSLRQLDSKITATRPLSFYAYSVGIIEGGELEGSHYQRFVQLKNWGLPMCEETKQCHSLTDVKAYYKDILERRDALKYEIDGVVIKVDSISLQEQLGFVARAPRWAIAYKFPAQEELTVLNDVEFQVGRTGAITPVAKLEPIFVGGVTVSNATLHNADEIARLGVHIGDTVIIRRAGDVIPQIVSVVEARRPEDSKAIIYPTTCPACDSQLERIEGEVVTRCVAGLVCPAQRKEALKHFVSRKALDVDGLGDKVVEQLVDKEMVETPADLFKLSAGVLTVLDRMGPKSAQNVVNALNKAKETTLSRFLYSLGIREVGEATAANLALHFQTLNAISSATFEQLIEVSDVGDIVAKHILGFFSEPHNQAVIENLQLMGVNWPDIKALDESVPQPLADKVVVLTGTLYKLKRNEAKAALQELGAKVAGSVSKNTDILFAGEAAGSKLAKAEELGVEIMNEEQLIEILNN</sequence>
<dbReference type="EC" id="6.5.1.2" evidence="1"/>
<dbReference type="EMBL" id="FM178379">
    <property type="protein sequence ID" value="CAQ80037.1"/>
    <property type="molecule type" value="Genomic_DNA"/>
</dbReference>
<dbReference type="RefSeq" id="WP_012550848.1">
    <property type="nucleotide sequence ID" value="NC_011312.1"/>
</dbReference>
<dbReference type="SMR" id="B6EJQ6"/>
<dbReference type="KEGG" id="vsa:VSAL_I2353"/>
<dbReference type="eggNOG" id="COG0272">
    <property type="taxonomic scope" value="Bacteria"/>
</dbReference>
<dbReference type="HOGENOM" id="CLU_007764_2_1_6"/>
<dbReference type="Proteomes" id="UP000001730">
    <property type="component" value="Chromosome 1"/>
</dbReference>
<dbReference type="GO" id="GO:0005829">
    <property type="term" value="C:cytosol"/>
    <property type="evidence" value="ECO:0007669"/>
    <property type="project" value="TreeGrafter"/>
</dbReference>
<dbReference type="GO" id="GO:0003677">
    <property type="term" value="F:DNA binding"/>
    <property type="evidence" value="ECO:0007669"/>
    <property type="project" value="InterPro"/>
</dbReference>
<dbReference type="GO" id="GO:0003911">
    <property type="term" value="F:DNA ligase (NAD+) activity"/>
    <property type="evidence" value="ECO:0007669"/>
    <property type="project" value="UniProtKB-UniRule"/>
</dbReference>
<dbReference type="GO" id="GO:0046872">
    <property type="term" value="F:metal ion binding"/>
    <property type="evidence" value="ECO:0007669"/>
    <property type="project" value="UniProtKB-KW"/>
</dbReference>
<dbReference type="GO" id="GO:0006281">
    <property type="term" value="P:DNA repair"/>
    <property type="evidence" value="ECO:0007669"/>
    <property type="project" value="UniProtKB-KW"/>
</dbReference>
<dbReference type="GO" id="GO:0006260">
    <property type="term" value="P:DNA replication"/>
    <property type="evidence" value="ECO:0007669"/>
    <property type="project" value="UniProtKB-KW"/>
</dbReference>
<dbReference type="CDD" id="cd17748">
    <property type="entry name" value="BRCT_DNA_ligase_like"/>
    <property type="match status" value="1"/>
</dbReference>
<dbReference type="CDD" id="cd00114">
    <property type="entry name" value="LIGANc"/>
    <property type="match status" value="1"/>
</dbReference>
<dbReference type="FunFam" id="1.10.150.20:FF:000006">
    <property type="entry name" value="DNA ligase"/>
    <property type="match status" value="1"/>
</dbReference>
<dbReference type="FunFam" id="1.10.150.20:FF:000007">
    <property type="entry name" value="DNA ligase"/>
    <property type="match status" value="1"/>
</dbReference>
<dbReference type="FunFam" id="1.10.287.610:FF:000002">
    <property type="entry name" value="DNA ligase"/>
    <property type="match status" value="1"/>
</dbReference>
<dbReference type="FunFam" id="2.40.50.140:FF:000012">
    <property type="entry name" value="DNA ligase"/>
    <property type="match status" value="1"/>
</dbReference>
<dbReference type="FunFam" id="3.30.470.30:FF:000001">
    <property type="entry name" value="DNA ligase"/>
    <property type="match status" value="1"/>
</dbReference>
<dbReference type="Gene3D" id="6.20.10.30">
    <property type="match status" value="1"/>
</dbReference>
<dbReference type="Gene3D" id="1.10.150.20">
    <property type="entry name" value="5' to 3' exonuclease, C-terminal subdomain"/>
    <property type="match status" value="2"/>
</dbReference>
<dbReference type="Gene3D" id="3.40.50.10190">
    <property type="entry name" value="BRCT domain"/>
    <property type="match status" value="1"/>
</dbReference>
<dbReference type="Gene3D" id="3.30.470.30">
    <property type="entry name" value="DNA ligase/mRNA capping enzyme"/>
    <property type="match status" value="1"/>
</dbReference>
<dbReference type="Gene3D" id="1.10.287.610">
    <property type="entry name" value="Helix hairpin bin"/>
    <property type="match status" value="1"/>
</dbReference>
<dbReference type="Gene3D" id="2.40.50.140">
    <property type="entry name" value="Nucleic acid-binding proteins"/>
    <property type="match status" value="1"/>
</dbReference>
<dbReference type="HAMAP" id="MF_01588">
    <property type="entry name" value="DNA_ligase_A"/>
    <property type="match status" value="1"/>
</dbReference>
<dbReference type="InterPro" id="IPR001357">
    <property type="entry name" value="BRCT_dom"/>
</dbReference>
<dbReference type="InterPro" id="IPR036420">
    <property type="entry name" value="BRCT_dom_sf"/>
</dbReference>
<dbReference type="InterPro" id="IPR041663">
    <property type="entry name" value="DisA/LigA_HHH"/>
</dbReference>
<dbReference type="InterPro" id="IPR001679">
    <property type="entry name" value="DNA_ligase"/>
</dbReference>
<dbReference type="InterPro" id="IPR018239">
    <property type="entry name" value="DNA_ligase_AS"/>
</dbReference>
<dbReference type="InterPro" id="IPR033136">
    <property type="entry name" value="DNA_ligase_CS"/>
</dbReference>
<dbReference type="InterPro" id="IPR013839">
    <property type="entry name" value="DNAligase_adenylation"/>
</dbReference>
<dbReference type="InterPro" id="IPR013840">
    <property type="entry name" value="DNAligase_N"/>
</dbReference>
<dbReference type="InterPro" id="IPR003583">
    <property type="entry name" value="Hlx-hairpin-Hlx_DNA-bd_motif"/>
</dbReference>
<dbReference type="InterPro" id="IPR012340">
    <property type="entry name" value="NA-bd_OB-fold"/>
</dbReference>
<dbReference type="InterPro" id="IPR004150">
    <property type="entry name" value="NAD_DNA_ligase_OB"/>
</dbReference>
<dbReference type="InterPro" id="IPR010994">
    <property type="entry name" value="RuvA_2-like"/>
</dbReference>
<dbReference type="InterPro" id="IPR004149">
    <property type="entry name" value="Znf_DNAligase_C4"/>
</dbReference>
<dbReference type="NCBIfam" id="TIGR00575">
    <property type="entry name" value="dnlj"/>
    <property type="match status" value="1"/>
</dbReference>
<dbReference type="NCBIfam" id="NF005932">
    <property type="entry name" value="PRK07956.1"/>
    <property type="match status" value="1"/>
</dbReference>
<dbReference type="PANTHER" id="PTHR23389">
    <property type="entry name" value="CHROMOSOME TRANSMISSION FIDELITY FACTOR 18"/>
    <property type="match status" value="1"/>
</dbReference>
<dbReference type="PANTHER" id="PTHR23389:SF9">
    <property type="entry name" value="DNA LIGASE"/>
    <property type="match status" value="1"/>
</dbReference>
<dbReference type="Pfam" id="PF00533">
    <property type="entry name" value="BRCT"/>
    <property type="match status" value="1"/>
</dbReference>
<dbReference type="Pfam" id="PF01653">
    <property type="entry name" value="DNA_ligase_aden"/>
    <property type="match status" value="1"/>
</dbReference>
<dbReference type="Pfam" id="PF03120">
    <property type="entry name" value="DNA_ligase_OB"/>
    <property type="match status" value="1"/>
</dbReference>
<dbReference type="Pfam" id="PF03119">
    <property type="entry name" value="DNA_ligase_ZBD"/>
    <property type="match status" value="1"/>
</dbReference>
<dbReference type="Pfam" id="PF12826">
    <property type="entry name" value="HHH_2"/>
    <property type="match status" value="1"/>
</dbReference>
<dbReference type="Pfam" id="PF14520">
    <property type="entry name" value="HHH_5"/>
    <property type="match status" value="1"/>
</dbReference>
<dbReference type="Pfam" id="PF22745">
    <property type="entry name" value="Nlig-Ia"/>
    <property type="match status" value="1"/>
</dbReference>
<dbReference type="PIRSF" id="PIRSF001604">
    <property type="entry name" value="LigA"/>
    <property type="match status" value="1"/>
</dbReference>
<dbReference type="SMART" id="SM00292">
    <property type="entry name" value="BRCT"/>
    <property type="match status" value="1"/>
</dbReference>
<dbReference type="SMART" id="SM00278">
    <property type="entry name" value="HhH1"/>
    <property type="match status" value="3"/>
</dbReference>
<dbReference type="SMART" id="SM00532">
    <property type="entry name" value="LIGANc"/>
    <property type="match status" value="1"/>
</dbReference>
<dbReference type="SUPFAM" id="SSF52113">
    <property type="entry name" value="BRCT domain"/>
    <property type="match status" value="1"/>
</dbReference>
<dbReference type="SUPFAM" id="SSF56091">
    <property type="entry name" value="DNA ligase/mRNA capping enzyme, catalytic domain"/>
    <property type="match status" value="1"/>
</dbReference>
<dbReference type="SUPFAM" id="SSF50249">
    <property type="entry name" value="Nucleic acid-binding proteins"/>
    <property type="match status" value="1"/>
</dbReference>
<dbReference type="SUPFAM" id="SSF47781">
    <property type="entry name" value="RuvA domain 2-like"/>
    <property type="match status" value="1"/>
</dbReference>
<dbReference type="PROSITE" id="PS50172">
    <property type="entry name" value="BRCT"/>
    <property type="match status" value="1"/>
</dbReference>
<dbReference type="PROSITE" id="PS01055">
    <property type="entry name" value="DNA_LIGASE_N1"/>
    <property type="match status" value="1"/>
</dbReference>
<dbReference type="PROSITE" id="PS01056">
    <property type="entry name" value="DNA_LIGASE_N2"/>
    <property type="match status" value="1"/>
</dbReference>
<name>DNLJ_ALISL</name>
<proteinExistence type="inferred from homology"/>
<organism>
    <name type="scientific">Aliivibrio salmonicida (strain LFI1238)</name>
    <name type="common">Vibrio salmonicida (strain LFI1238)</name>
    <dbReference type="NCBI Taxonomy" id="316275"/>
    <lineage>
        <taxon>Bacteria</taxon>
        <taxon>Pseudomonadati</taxon>
        <taxon>Pseudomonadota</taxon>
        <taxon>Gammaproteobacteria</taxon>
        <taxon>Vibrionales</taxon>
        <taxon>Vibrionaceae</taxon>
        <taxon>Aliivibrio</taxon>
    </lineage>
</organism>
<accession>B6EJQ6</accession>
<comment type="function">
    <text evidence="1">DNA ligase that catalyzes the formation of phosphodiester linkages between 5'-phosphoryl and 3'-hydroxyl groups in double-stranded DNA using NAD as a coenzyme and as the energy source for the reaction. It is essential for DNA replication and repair of damaged DNA.</text>
</comment>
<comment type="catalytic activity">
    <reaction evidence="1">
        <text>NAD(+) + (deoxyribonucleotide)n-3'-hydroxyl + 5'-phospho-(deoxyribonucleotide)m = (deoxyribonucleotide)n+m + AMP + beta-nicotinamide D-nucleotide.</text>
        <dbReference type="EC" id="6.5.1.2"/>
    </reaction>
</comment>
<comment type="cofactor">
    <cofactor evidence="1">
        <name>Mg(2+)</name>
        <dbReference type="ChEBI" id="CHEBI:18420"/>
    </cofactor>
    <cofactor evidence="1">
        <name>Mn(2+)</name>
        <dbReference type="ChEBI" id="CHEBI:29035"/>
    </cofactor>
</comment>
<comment type="similarity">
    <text evidence="1">Belongs to the NAD-dependent DNA ligase family. LigA subfamily.</text>
</comment>